<sequence>MRRASRSPFILSPVAHAVSRLVLCATLGWTYAGSGHAQVPAPAGGSEVPLGARPPASAPVAAQQETPLKLKSSPALAEEVPNGPGDEGPTFVFGDSVSGRPNLETVIDGNAELRRGATSIRADRIEYYQPEDRVKSRGNVRINNAGNRFEGPELEITLDRFEGFFTQPRYRFLSNGGNGQAERVDFIDDKHLTAHRASYTTCERDNEASWKPAWELRARSFEFDFDEEVGVANGAVLRFKNVPILGFPKFSFPLSDKRKSGLLPPTLNMSSVNGFEVRQPYYFDIAPNRDATFSPAIMTKRGVDLAGEFRYLEPTYKGELRANILPGDKLRNRDRWSYGYQHSGTIDSGLSAIGNLGVNLNLSRVSDNDYWRDFPIASNSTTQRLLAQDATVSWNRGFFAAAVRTLKWQTLQDLSAPIVPPYDRLPQFTANYTRVDAPLLGLGRGFDWSVEGDYTRFSADRTLTGQPNSNRAFTRAQLSHPWLSPAGFITPKMQLHATSYQFDAPLVNGARSASRTVPTFSLDSGLQFERQAGFLGRSFTQTLEPRAFYVRTPYRDQSLLPNYDSGANDFNFATVFTENAFVGNDRISDANLLTLGVTSRLLDPATGAEAVRVGVAQRLRFADQRVTLPGALPITDRISDLLVGASVNWVPQWSFDSTVQYNPKTKQSERSSIGVRYNPGNYRVISAAYRRQRNISEQIDVGWQWPLNDLWGDKGRDLGAGQGQGGGRYYAVGRLNYSVPDRKLVDAIVGVEYDGCCWIGRVVLQRTQNGTATSDTRILFQLELVGFSRIGANPLETLKSNVPRYQYLREKINTPSRFTTYD</sequence>
<name>LPTD_POLSJ</name>
<gene>
    <name evidence="1" type="primary">lptD</name>
    <name type="synonym">imp</name>
    <name type="synonym">ostA</name>
    <name type="ordered locus">Bpro_4863</name>
</gene>
<evidence type="ECO:0000255" key="1">
    <source>
        <dbReference type="HAMAP-Rule" id="MF_01411"/>
    </source>
</evidence>
<evidence type="ECO:0000256" key="2">
    <source>
        <dbReference type="SAM" id="MobiDB-lite"/>
    </source>
</evidence>
<protein>
    <recommendedName>
        <fullName evidence="1">LPS-assembly protein LptD</fullName>
    </recommendedName>
</protein>
<organism>
    <name type="scientific">Polaromonas sp. (strain JS666 / ATCC BAA-500)</name>
    <dbReference type="NCBI Taxonomy" id="296591"/>
    <lineage>
        <taxon>Bacteria</taxon>
        <taxon>Pseudomonadati</taxon>
        <taxon>Pseudomonadota</taxon>
        <taxon>Betaproteobacteria</taxon>
        <taxon>Burkholderiales</taxon>
        <taxon>Comamonadaceae</taxon>
        <taxon>Polaromonas</taxon>
    </lineage>
</organism>
<proteinExistence type="inferred from homology"/>
<comment type="function">
    <text evidence="1">Together with LptE, is involved in the assembly of lipopolysaccharide (LPS) at the surface of the outer membrane.</text>
</comment>
<comment type="subunit">
    <text evidence="1">Component of the lipopolysaccharide transport and assembly complex. Interacts with LptE and LptA.</text>
</comment>
<comment type="subcellular location">
    <subcellularLocation>
        <location evidence="1">Cell outer membrane</location>
    </subcellularLocation>
</comment>
<comment type="similarity">
    <text evidence="1">Belongs to the LptD family.</text>
</comment>
<dbReference type="EMBL" id="CP000316">
    <property type="protein sequence ID" value="ABE46739.1"/>
    <property type="molecule type" value="Genomic_DNA"/>
</dbReference>
<dbReference type="RefSeq" id="WP_011485724.1">
    <property type="nucleotide sequence ID" value="NC_007948.1"/>
</dbReference>
<dbReference type="SMR" id="Q121Q3"/>
<dbReference type="STRING" id="296591.Bpro_4863"/>
<dbReference type="KEGG" id="pol:Bpro_4863"/>
<dbReference type="eggNOG" id="COG1452">
    <property type="taxonomic scope" value="Bacteria"/>
</dbReference>
<dbReference type="HOGENOM" id="CLU_009039_0_0_4"/>
<dbReference type="OrthoDB" id="9760225at2"/>
<dbReference type="Proteomes" id="UP000001983">
    <property type="component" value="Chromosome"/>
</dbReference>
<dbReference type="GO" id="GO:0009279">
    <property type="term" value="C:cell outer membrane"/>
    <property type="evidence" value="ECO:0007669"/>
    <property type="project" value="UniProtKB-SubCell"/>
</dbReference>
<dbReference type="GO" id="GO:1990351">
    <property type="term" value="C:transporter complex"/>
    <property type="evidence" value="ECO:0007669"/>
    <property type="project" value="TreeGrafter"/>
</dbReference>
<dbReference type="GO" id="GO:0043165">
    <property type="term" value="P:Gram-negative-bacterium-type cell outer membrane assembly"/>
    <property type="evidence" value="ECO:0007669"/>
    <property type="project" value="UniProtKB-UniRule"/>
</dbReference>
<dbReference type="GO" id="GO:0015920">
    <property type="term" value="P:lipopolysaccharide transport"/>
    <property type="evidence" value="ECO:0007669"/>
    <property type="project" value="InterPro"/>
</dbReference>
<dbReference type="HAMAP" id="MF_01411">
    <property type="entry name" value="LPS_assembly_LptD"/>
    <property type="match status" value="1"/>
</dbReference>
<dbReference type="InterPro" id="IPR020889">
    <property type="entry name" value="LipoPS_assembly_LptD"/>
</dbReference>
<dbReference type="InterPro" id="IPR050218">
    <property type="entry name" value="LptD"/>
</dbReference>
<dbReference type="InterPro" id="IPR007543">
    <property type="entry name" value="LptD_C"/>
</dbReference>
<dbReference type="PANTHER" id="PTHR30189">
    <property type="entry name" value="LPS-ASSEMBLY PROTEIN"/>
    <property type="match status" value="1"/>
</dbReference>
<dbReference type="PANTHER" id="PTHR30189:SF1">
    <property type="entry name" value="LPS-ASSEMBLY PROTEIN LPTD"/>
    <property type="match status" value="1"/>
</dbReference>
<dbReference type="Pfam" id="PF04453">
    <property type="entry name" value="LptD"/>
    <property type="match status" value="1"/>
</dbReference>
<feature type="signal peptide" evidence="1">
    <location>
        <begin position="1"/>
        <end position="37"/>
    </location>
</feature>
<feature type="chain" id="PRO_5000117340" description="LPS-assembly protein LptD">
    <location>
        <begin position="38"/>
        <end position="822"/>
    </location>
</feature>
<feature type="region of interest" description="Disordered" evidence="2">
    <location>
        <begin position="38"/>
        <end position="97"/>
    </location>
</feature>
<accession>Q121Q3</accession>
<reference key="1">
    <citation type="journal article" date="2008" name="Appl. Environ. Microbiol.">
        <title>The genome of Polaromonas sp. strain JS666: insights into the evolution of a hydrocarbon- and xenobiotic-degrading bacterium, and features of relevance to biotechnology.</title>
        <authorList>
            <person name="Mattes T.E."/>
            <person name="Alexander A.K."/>
            <person name="Richardson P.M."/>
            <person name="Munk A.C."/>
            <person name="Han C.S."/>
            <person name="Stothard P."/>
            <person name="Coleman N.V."/>
        </authorList>
    </citation>
    <scope>NUCLEOTIDE SEQUENCE [LARGE SCALE GENOMIC DNA]</scope>
    <source>
        <strain>JS666 / ATCC BAA-500</strain>
    </source>
</reference>
<keyword id="KW-0998">Cell outer membrane</keyword>
<keyword id="KW-0472">Membrane</keyword>
<keyword id="KW-1185">Reference proteome</keyword>
<keyword id="KW-0732">Signal</keyword>